<dbReference type="EMBL" id="AE005674">
    <property type="protein sequence ID" value="AAN45716.2"/>
    <property type="status" value="ALT_INIT"/>
    <property type="molecule type" value="Genomic_DNA"/>
</dbReference>
<dbReference type="EMBL" id="AE014073">
    <property type="protein sequence ID" value="AAP19502.1"/>
    <property type="status" value="ALT_INIT"/>
    <property type="molecule type" value="Genomic_DNA"/>
</dbReference>
<dbReference type="RefSeq" id="NP_710009.2">
    <property type="nucleotide sequence ID" value="NC_004337.2"/>
</dbReference>
<dbReference type="RefSeq" id="WP_000558209.1">
    <property type="nucleotide sequence ID" value="NZ_WPGW01000108.1"/>
</dbReference>
<dbReference type="SMR" id="P0AF72"/>
<dbReference type="STRING" id="198214.SF4298"/>
<dbReference type="PaxDb" id="198214-SF4298"/>
<dbReference type="GeneID" id="1024269"/>
<dbReference type="KEGG" id="sfl:SF4298"/>
<dbReference type="KEGG" id="sfx:S4565"/>
<dbReference type="PATRIC" id="fig|198214.7.peg.5068"/>
<dbReference type="HOGENOM" id="CLU_128258_2_0_6"/>
<dbReference type="Proteomes" id="UP000001006">
    <property type="component" value="Chromosome"/>
</dbReference>
<dbReference type="Proteomes" id="UP000002673">
    <property type="component" value="Chromosome"/>
</dbReference>
<dbReference type="InterPro" id="IPR025294">
    <property type="entry name" value="DUF4156"/>
</dbReference>
<dbReference type="Pfam" id="PF13698">
    <property type="entry name" value="DUF4156"/>
    <property type="match status" value="1"/>
</dbReference>
<dbReference type="PROSITE" id="PS51257">
    <property type="entry name" value="PROKAR_LIPOPROTEIN"/>
    <property type="match status" value="1"/>
</dbReference>
<protein>
    <recommendedName>
        <fullName>Uncharacterized protein YjeI</fullName>
    </recommendedName>
</protein>
<comment type="sequence caution" evidence="2">
    <conflict type="erroneous initiation">
        <sequence resource="EMBL-CDS" id="AAN45716"/>
    </conflict>
    <text>Extended N-terminus.</text>
</comment>
<comment type="sequence caution" evidence="2">
    <conflict type="erroneous initiation">
        <sequence resource="EMBL-CDS" id="AAP19502"/>
    </conflict>
    <text>Extended N-terminus.</text>
</comment>
<accession>P0AF72</accession>
<accession>P39278</accession>
<sequence>MHVKYLAGIVGAALLMAGCSSSNELSAAGQSVRIVDEQPGAECQLIGTATGKQSNWLSGQHGEEGGSMRGAANDLRNQAAAMGGNVIYGISSPSQGMLSSFVPTDSQIIGQVYKCPN</sequence>
<gene>
    <name type="primary">yjeI</name>
    <name type="ordered locus">SF4298</name>
    <name type="ordered locus">S4565</name>
</gene>
<name>YJEI_SHIFL</name>
<feature type="signal peptide" evidence="1">
    <location>
        <begin position="1"/>
        <end position="22"/>
    </location>
</feature>
<feature type="chain" id="PRO_0000044596" description="Uncharacterized protein YjeI">
    <location>
        <begin position="23"/>
        <end position="117"/>
    </location>
</feature>
<evidence type="ECO:0000255" key="1">
    <source>
        <dbReference type="PROSITE-ProRule" id="PRU00303"/>
    </source>
</evidence>
<evidence type="ECO:0000305" key="2"/>
<reference key="1">
    <citation type="journal article" date="2002" name="Nucleic Acids Res.">
        <title>Genome sequence of Shigella flexneri 2a: insights into pathogenicity through comparison with genomes of Escherichia coli K12 and O157.</title>
        <authorList>
            <person name="Jin Q."/>
            <person name="Yuan Z."/>
            <person name="Xu J."/>
            <person name="Wang Y."/>
            <person name="Shen Y."/>
            <person name="Lu W."/>
            <person name="Wang J."/>
            <person name="Liu H."/>
            <person name="Yang J."/>
            <person name="Yang F."/>
            <person name="Zhang X."/>
            <person name="Zhang J."/>
            <person name="Yang G."/>
            <person name="Wu H."/>
            <person name="Qu D."/>
            <person name="Dong J."/>
            <person name="Sun L."/>
            <person name="Xue Y."/>
            <person name="Zhao A."/>
            <person name="Gao Y."/>
            <person name="Zhu J."/>
            <person name="Kan B."/>
            <person name="Ding K."/>
            <person name="Chen S."/>
            <person name="Cheng H."/>
            <person name="Yao Z."/>
            <person name="He B."/>
            <person name="Chen R."/>
            <person name="Ma D."/>
            <person name="Qiang B."/>
            <person name="Wen Y."/>
            <person name="Hou Y."/>
            <person name="Yu J."/>
        </authorList>
    </citation>
    <scope>NUCLEOTIDE SEQUENCE [LARGE SCALE GENOMIC DNA]</scope>
    <source>
        <strain>301 / Serotype 2a</strain>
    </source>
</reference>
<reference key="2">
    <citation type="journal article" date="2003" name="Infect. Immun.">
        <title>Complete genome sequence and comparative genomics of Shigella flexneri serotype 2a strain 2457T.</title>
        <authorList>
            <person name="Wei J."/>
            <person name="Goldberg M.B."/>
            <person name="Burland V."/>
            <person name="Venkatesan M.M."/>
            <person name="Deng W."/>
            <person name="Fournier G."/>
            <person name="Mayhew G.F."/>
            <person name="Plunkett G. III"/>
            <person name="Rose D.J."/>
            <person name="Darling A."/>
            <person name="Mau B."/>
            <person name="Perna N.T."/>
            <person name="Payne S.M."/>
            <person name="Runyen-Janecky L.J."/>
            <person name="Zhou S."/>
            <person name="Schwartz D.C."/>
            <person name="Blattner F.R."/>
        </authorList>
    </citation>
    <scope>NUCLEOTIDE SEQUENCE [LARGE SCALE GENOMIC DNA]</scope>
    <source>
        <strain>ATCC 700930 / 2457T / Serotype 2a</strain>
    </source>
</reference>
<keyword id="KW-1185">Reference proteome</keyword>
<keyword id="KW-0732">Signal</keyword>
<organism>
    <name type="scientific">Shigella flexneri</name>
    <dbReference type="NCBI Taxonomy" id="623"/>
    <lineage>
        <taxon>Bacteria</taxon>
        <taxon>Pseudomonadati</taxon>
        <taxon>Pseudomonadota</taxon>
        <taxon>Gammaproteobacteria</taxon>
        <taxon>Enterobacterales</taxon>
        <taxon>Enterobacteriaceae</taxon>
        <taxon>Shigella</taxon>
    </lineage>
</organism>
<proteinExistence type="inferred from homology"/>